<evidence type="ECO:0000305" key="1"/>
<sequence>MKIKLTDQAVEWFKDELDLPENNKVLQFYVRYGGEFQLKQGFSPAFRVEPREDVEIGYEENYNDLILVVSEEDLWYFEDNEVLVEKVDHDDEIAYSKLK</sequence>
<comment type="similarity">
    <text evidence="1">Belongs to the HesB/IscA family.</text>
</comment>
<name>Y1556_STAHJ</name>
<dbReference type="EMBL" id="AP006716">
    <property type="protein sequence ID" value="BAE04865.1"/>
    <property type="molecule type" value="Genomic_DNA"/>
</dbReference>
<dbReference type="RefSeq" id="WP_011275847.1">
    <property type="nucleotide sequence ID" value="NC_007168.1"/>
</dbReference>
<dbReference type="SMR" id="Q4L660"/>
<dbReference type="KEGG" id="sha:SH1556"/>
<dbReference type="eggNOG" id="COG4841">
    <property type="taxonomic scope" value="Bacteria"/>
</dbReference>
<dbReference type="HOGENOM" id="CLU_163967_0_0_9"/>
<dbReference type="OrthoDB" id="1645729at2"/>
<dbReference type="Proteomes" id="UP000000543">
    <property type="component" value="Chromosome"/>
</dbReference>
<dbReference type="InterPro" id="IPR035903">
    <property type="entry name" value="HesB-like_dom_sf"/>
</dbReference>
<dbReference type="InterPro" id="IPR008326">
    <property type="entry name" value="PdhI-like"/>
</dbReference>
<dbReference type="PIRSF" id="PIRSF034852">
    <property type="entry name" value="UCP034852"/>
    <property type="match status" value="1"/>
</dbReference>
<dbReference type="SUPFAM" id="SSF89360">
    <property type="entry name" value="HesB-like domain"/>
    <property type="match status" value="1"/>
</dbReference>
<gene>
    <name type="ordered locus">SH1556</name>
</gene>
<feature type="chain" id="PRO_0000300091" description="Uncharacterized protein SH1556">
    <location>
        <begin position="1"/>
        <end position="99"/>
    </location>
</feature>
<reference key="1">
    <citation type="journal article" date="2005" name="J. Bacteriol.">
        <title>Whole-genome sequencing of Staphylococcus haemolyticus uncovers the extreme plasticity of its genome and the evolution of human-colonizing staphylococcal species.</title>
        <authorList>
            <person name="Takeuchi F."/>
            <person name="Watanabe S."/>
            <person name="Baba T."/>
            <person name="Yuzawa H."/>
            <person name="Ito T."/>
            <person name="Morimoto Y."/>
            <person name="Kuroda M."/>
            <person name="Cui L."/>
            <person name="Takahashi M."/>
            <person name="Ankai A."/>
            <person name="Baba S."/>
            <person name="Fukui S."/>
            <person name="Lee J.C."/>
            <person name="Hiramatsu K."/>
        </authorList>
    </citation>
    <scope>NUCLEOTIDE SEQUENCE [LARGE SCALE GENOMIC DNA]</scope>
    <source>
        <strain>JCSC1435</strain>
    </source>
</reference>
<proteinExistence type="inferred from homology"/>
<accession>Q4L660</accession>
<protein>
    <recommendedName>
        <fullName>Uncharacterized protein SH1556</fullName>
    </recommendedName>
</protein>
<organism>
    <name type="scientific">Staphylococcus haemolyticus (strain JCSC1435)</name>
    <dbReference type="NCBI Taxonomy" id="279808"/>
    <lineage>
        <taxon>Bacteria</taxon>
        <taxon>Bacillati</taxon>
        <taxon>Bacillota</taxon>
        <taxon>Bacilli</taxon>
        <taxon>Bacillales</taxon>
        <taxon>Staphylococcaceae</taxon>
        <taxon>Staphylococcus</taxon>
    </lineage>
</organism>